<feature type="chain" id="PRO_0000177588" description="Translation initiation factor IF-3">
    <location>
        <begin position="1"/>
        <end position="185"/>
    </location>
</feature>
<dbReference type="EMBL" id="AE005672">
    <property type="protein sequence ID" value="AAK75080.1"/>
    <property type="molecule type" value="Genomic_DNA"/>
</dbReference>
<dbReference type="PIR" id="G95110">
    <property type="entry name" value="G95110"/>
</dbReference>
<dbReference type="SMR" id="P65144"/>
<dbReference type="IntAct" id="P65144">
    <property type="interactions" value="4"/>
</dbReference>
<dbReference type="PaxDb" id="170187-SP_0959"/>
<dbReference type="EnsemblBacteria" id="AAK75080">
    <property type="protein sequence ID" value="AAK75080"/>
    <property type="gene ID" value="SP_0959"/>
</dbReference>
<dbReference type="KEGG" id="spn:SP_0959"/>
<dbReference type="eggNOG" id="COG0290">
    <property type="taxonomic scope" value="Bacteria"/>
</dbReference>
<dbReference type="PhylomeDB" id="P65144"/>
<dbReference type="BioCyc" id="SPNE170187:G1FZB-987-MONOMER"/>
<dbReference type="Proteomes" id="UP000000585">
    <property type="component" value="Chromosome"/>
</dbReference>
<dbReference type="GO" id="GO:0005829">
    <property type="term" value="C:cytosol"/>
    <property type="evidence" value="ECO:0007669"/>
    <property type="project" value="TreeGrafter"/>
</dbReference>
<dbReference type="GO" id="GO:0016020">
    <property type="term" value="C:membrane"/>
    <property type="evidence" value="ECO:0007669"/>
    <property type="project" value="TreeGrafter"/>
</dbReference>
<dbReference type="GO" id="GO:0043022">
    <property type="term" value="F:ribosome binding"/>
    <property type="evidence" value="ECO:0007669"/>
    <property type="project" value="TreeGrafter"/>
</dbReference>
<dbReference type="GO" id="GO:0003743">
    <property type="term" value="F:translation initiation factor activity"/>
    <property type="evidence" value="ECO:0007669"/>
    <property type="project" value="UniProtKB-UniRule"/>
</dbReference>
<dbReference type="GO" id="GO:0032790">
    <property type="term" value="P:ribosome disassembly"/>
    <property type="evidence" value="ECO:0007669"/>
    <property type="project" value="TreeGrafter"/>
</dbReference>
<dbReference type="FunFam" id="3.10.20.80:FF:000001">
    <property type="entry name" value="Translation initiation factor IF-3"/>
    <property type="match status" value="1"/>
</dbReference>
<dbReference type="FunFam" id="3.30.110.10:FF:000001">
    <property type="entry name" value="Translation initiation factor IF-3"/>
    <property type="match status" value="1"/>
</dbReference>
<dbReference type="Gene3D" id="3.30.110.10">
    <property type="entry name" value="Translation initiation factor 3 (IF-3), C-terminal domain"/>
    <property type="match status" value="1"/>
</dbReference>
<dbReference type="Gene3D" id="3.10.20.80">
    <property type="entry name" value="Translation initiation factor 3 (IF-3), N-terminal domain"/>
    <property type="match status" value="1"/>
</dbReference>
<dbReference type="HAMAP" id="MF_00080">
    <property type="entry name" value="IF_3"/>
    <property type="match status" value="1"/>
</dbReference>
<dbReference type="InterPro" id="IPR036788">
    <property type="entry name" value="T_IF-3_C_sf"/>
</dbReference>
<dbReference type="InterPro" id="IPR036787">
    <property type="entry name" value="T_IF-3_N_sf"/>
</dbReference>
<dbReference type="InterPro" id="IPR019813">
    <property type="entry name" value="Translation_initiation_fac3_CS"/>
</dbReference>
<dbReference type="InterPro" id="IPR001288">
    <property type="entry name" value="Translation_initiation_fac_3"/>
</dbReference>
<dbReference type="InterPro" id="IPR019815">
    <property type="entry name" value="Translation_initiation_fac_3_C"/>
</dbReference>
<dbReference type="InterPro" id="IPR019814">
    <property type="entry name" value="Translation_initiation_fac_3_N"/>
</dbReference>
<dbReference type="NCBIfam" id="TIGR00168">
    <property type="entry name" value="infC"/>
    <property type="match status" value="1"/>
</dbReference>
<dbReference type="PANTHER" id="PTHR10938">
    <property type="entry name" value="TRANSLATION INITIATION FACTOR IF-3"/>
    <property type="match status" value="1"/>
</dbReference>
<dbReference type="PANTHER" id="PTHR10938:SF0">
    <property type="entry name" value="TRANSLATION INITIATION FACTOR IF-3, MITOCHONDRIAL"/>
    <property type="match status" value="1"/>
</dbReference>
<dbReference type="Pfam" id="PF00707">
    <property type="entry name" value="IF3_C"/>
    <property type="match status" value="1"/>
</dbReference>
<dbReference type="Pfam" id="PF05198">
    <property type="entry name" value="IF3_N"/>
    <property type="match status" value="1"/>
</dbReference>
<dbReference type="SUPFAM" id="SSF55200">
    <property type="entry name" value="Translation initiation factor IF3, C-terminal domain"/>
    <property type="match status" value="1"/>
</dbReference>
<dbReference type="SUPFAM" id="SSF54364">
    <property type="entry name" value="Translation initiation factor IF3, N-terminal domain"/>
    <property type="match status" value="1"/>
</dbReference>
<dbReference type="PROSITE" id="PS00938">
    <property type="entry name" value="IF3"/>
    <property type="match status" value="1"/>
</dbReference>
<protein>
    <recommendedName>
        <fullName evidence="1">Translation initiation factor IF-3</fullName>
    </recommendedName>
</protein>
<gene>
    <name evidence="1" type="primary">infC</name>
    <name type="ordered locus">SP_0959</name>
</gene>
<evidence type="ECO:0000255" key="1">
    <source>
        <dbReference type="HAMAP-Rule" id="MF_00080"/>
    </source>
</evidence>
<comment type="function">
    <text evidence="1">IF-3 binds to the 30S ribosomal subunit and shifts the equilibrium between 70S ribosomes and their 50S and 30S subunits in favor of the free subunits, thus enhancing the availability of 30S subunits on which protein synthesis initiation begins.</text>
</comment>
<comment type="subunit">
    <text evidence="1">Monomer.</text>
</comment>
<comment type="interaction">
    <interactant intactId="EBI-2207149">
        <id>P65144</id>
    </interactant>
    <interactant intactId="EBI-2207053">
        <id>Q97SE5</id>
        <label>gatC</label>
    </interactant>
    <organismsDiffer>false</organismsDiffer>
    <experiments>2</experiments>
</comment>
<comment type="interaction">
    <interactant intactId="EBI-2207149">
        <id>P65144</id>
    </interactant>
    <interactant intactId="EBI-2206949">
        <id>Q97NV3</id>
        <label>groES</label>
    </interactant>
    <organismsDiffer>false</organismsDiffer>
    <experiments>2</experiments>
</comment>
<comment type="interaction">
    <interactant intactId="EBI-2207149">
        <id>P65144</id>
    </interactant>
    <interactant intactId="EBI-2207065">
        <id>Q97S73</id>
        <label>grpE</label>
    </interactant>
    <organismsDiffer>false</organismsDiffer>
    <experiments>2</experiments>
</comment>
<comment type="interaction">
    <interactant intactId="EBI-2207149">
        <id>P65144</id>
    </interactant>
    <interactant intactId="EBI-2206983">
        <id>Q97SR4</id>
        <label>uppS</label>
    </interactant>
    <organismsDiffer>false</organismsDiffer>
    <experiments>2</experiments>
</comment>
<comment type="subcellular location">
    <subcellularLocation>
        <location evidence="1">Cytoplasm</location>
    </subcellularLocation>
</comment>
<comment type="similarity">
    <text evidence="1">Belongs to the IF-3 family.</text>
</comment>
<organism>
    <name type="scientific">Streptococcus pneumoniae serotype 4 (strain ATCC BAA-334 / TIGR4)</name>
    <dbReference type="NCBI Taxonomy" id="170187"/>
    <lineage>
        <taxon>Bacteria</taxon>
        <taxon>Bacillati</taxon>
        <taxon>Bacillota</taxon>
        <taxon>Bacilli</taxon>
        <taxon>Lactobacillales</taxon>
        <taxon>Streptococcaceae</taxon>
        <taxon>Streptococcus</taxon>
    </lineage>
</organism>
<accession>P65144</accession>
<accession>Q97R70</accession>
<name>IF3_STRPN</name>
<sequence>MFFSNKTKEVKTIAKQDLFINDEIRVREVRLIGLEGEQLGIKPLSEAQALADNANVDLVLIQPQAKPPVAKIMDYGKFKFEYQKKQKEQRKKQSVVTVKEVRLSPTIDKGDFDTKLRNARKFLEKGNKVKVSIRFKGRMITHKEIGAKVLAEFAEATQDIAIIEQRAKMDGRQMFMQLAPATDKK</sequence>
<proteinExistence type="evidence at protein level"/>
<keyword id="KW-0963">Cytoplasm</keyword>
<keyword id="KW-0396">Initiation factor</keyword>
<keyword id="KW-0648">Protein biosynthesis</keyword>
<keyword id="KW-1185">Reference proteome</keyword>
<reference key="1">
    <citation type="journal article" date="2001" name="Science">
        <title>Complete genome sequence of a virulent isolate of Streptococcus pneumoniae.</title>
        <authorList>
            <person name="Tettelin H."/>
            <person name="Nelson K.E."/>
            <person name="Paulsen I.T."/>
            <person name="Eisen J.A."/>
            <person name="Read T.D."/>
            <person name="Peterson S.N."/>
            <person name="Heidelberg J.F."/>
            <person name="DeBoy R.T."/>
            <person name="Haft D.H."/>
            <person name="Dodson R.J."/>
            <person name="Durkin A.S."/>
            <person name="Gwinn M.L."/>
            <person name="Kolonay J.F."/>
            <person name="Nelson W.C."/>
            <person name="Peterson J.D."/>
            <person name="Umayam L.A."/>
            <person name="White O."/>
            <person name="Salzberg S.L."/>
            <person name="Lewis M.R."/>
            <person name="Radune D."/>
            <person name="Holtzapple E.K."/>
            <person name="Khouri H.M."/>
            <person name="Wolf A.M."/>
            <person name="Utterback T.R."/>
            <person name="Hansen C.L."/>
            <person name="McDonald L.A."/>
            <person name="Feldblyum T.V."/>
            <person name="Angiuoli S.V."/>
            <person name="Dickinson T."/>
            <person name="Hickey E.K."/>
            <person name="Holt I.E."/>
            <person name="Loftus B.J."/>
            <person name="Yang F."/>
            <person name="Smith H.O."/>
            <person name="Venter J.C."/>
            <person name="Dougherty B.A."/>
            <person name="Morrison D.A."/>
            <person name="Hollingshead S.K."/>
            <person name="Fraser C.M."/>
        </authorList>
    </citation>
    <scope>NUCLEOTIDE SEQUENCE [LARGE SCALE GENOMIC DNA]</scope>
    <source>
        <strain>ATCC BAA-334 / TIGR4</strain>
    </source>
</reference>